<gene>
    <name type="ordered locus">SPH_0758</name>
</gene>
<comment type="similarity">
    <text evidence="1">Belongs to the UPF0340 family.</text>
</comment>
<dbReference type="EMBL" id="CP000936">
    <property type="protein sequence ID" value="ACA36752.1"/>
    <property type="molecule type" value="Genomic_DNA"/>
</dbReference>
<dbReference type="RefSeq" id="WP_001006377.1">
    <property type="nucleotide sequence ID" value="NC_010380.1"/>
</dbReference>
<dbReference type="SMR" id="B1IAK1"/>
<dbReference type="KEGG" id="spv:SPH_0758"/>
<dbReference type="HOGENOM" id="CLU_106658_0_0_9"/>
<dbReference type="Proteomes" id="UP000002163">
    <property type="component" value="Chromosome"/>
</dbReference>
<dbReference type="Gene3D" id="3.40.50.10360">
    <property type="entry name" value="Hypothetical protein TT1679"/>
    <property type="match status" value="1"/>
</dbReference>
<dbReference type="HAMAP" id="MF_00800">
    <property type="entry name" value="UPF0340"/>
    <property type="match status" value="1"/>
</dbReference>
<dbReference type="InterPro" id="IPR028345">
    <property type="entry name" value="Antibiotic_NAT-like"/>
</dbReference>
<dbReference type="InterPro" id="IPR006340">
    <property type="entry name" value="DUF436"/>
</dbReference>
<dbReference type="NCBIfam" id="TIGR01440">
    <property type="entry name" value="TIGR01440 family protein"/>
    <property type="match status" value="1"/>
</dbReference>
<dbReference type="Pfam" id="PF04260">
    <property type="entry name" value="DUF436"/>
    <property type="match status" value="1"/>
</dbReference>
<dbReference type="PIRSF" id="PIRSF007510">
    <property type="entry name" value="UCP007510"/>
    <property type="match status" value="1"/>
</dbReference>
<dbReference type="SUPFAM" id="SSF110710">
    <property type="entry name" value="TTHA0583/YokD-like"/>
    <property type="match status" value="1"/>
</dbReference>
<proteinExistence type="inferred from homology"/>
<sequence length="187" mass="20278">MNETQIQRETRQVVEDVLEKTNLKQGVLFVLGLSSSEVLGGQIGKESSQEIGELIVETILGILGSRGIHLAVQGCEHVNRALVVERQVAEQFDLEIVSVHPTLHAGGSGQLAAFKFMQDPVEVEFIKAHAGLDIGDTAIGMHVKHVQVPIRPILREIGHAHVTALASRPKLIGGARAHYPQDAIRKS</sequence>
<feature type="chain" id="PRO_1000198485" description="UPF0340 protein SPH_0758">
    <location>
        <begin position="1"/>
        <end position="187"/>
    </location>
</feature>
<protein>
    <recommendedName>
        <fullName evidence="1">UPF0340 protein SPH_0758</fullName>
    </recommendedName>
</protein>
<evidence type="ECO:0000255" key="1">
    <source>
        <dbReference type="HAMAP-Rule" id="MF_00800"/>
    </source>
</evidence>
<organism>
    <name type="scientific">Streptococcus pneumoniae (strain Hungary19A-6)</name>
    <dbReference type="NCBI Taxonomy" id="487214"/>
    <lineage>
        <taxon>Bacteria</taxon>
        <taxon>Bacillati</taxon>
        <taxon>Bacillota</taxon>
        <taxon>Bacilli</taxon>
        <taxon>Lactobacillales</taxon>
        <taxon>Streptococcaceae</taxon>
        <taxon>Streptococcus</taxon>
    </lineage>
</organism>
<accession>B1IAK1</accession>
<reference key="1">
    <citation type="journal article" date="2010" name="Genome Biol.">
        <title>Structure and dynamics of the pan-genome of Streptococcus pneumoniae and closely related species.</title>
        <authorList>
            <person name="Donati C."/>
            <person name="Hiller N.L."/>
            <person name="Tettelin H."/>
            <person name="Muzzi A."/>
            <person name="Croucher N.J."/>
            <person name="Angiuoli S.V."/>
            <person name="Oggioni M."/>
            <person name="Dunning Hotopp J.C."/>
            <person name="Hu F.Z."/>
            <person name="Riley D.R."/>
            <person name="Covacci A."/>
            <person name="Mitchell T.J."/>
            <person name="Bentley S.D."/>
            <person name="Kilian M."/>
            <person name="Ehrlich G.D."/>
            <person name="Rappuoli R."/>
            <person name="Moxon E.R."/>
            <person name="Masignani V."/>
        </authorList>
    </citation>
    <scope>NUCLEOTIDE SEQUENCE [LARGE SCALE GENOMIC DNA]</scope>
    <source>
        <strain>Hungary19A-6</strain>
    </source>
</reference>
<name>Y758_STRPI</name>